<name>RL29_HAEI8</name>
<dbReference type="EMBL" id="CP000057">
    <property type="protein sequence ID" value="AAX87833.1"/>
    <property type="molecule type" value="Genomic_DNA"/>
</dbReference>
<dbReference type="RefSeq" id="WP_005625888.1">
    <property type="nucleotide sequence ID" value="NC_007146.2"/>
</dbReference>
<dbReference type="SMR" id="Q4QMB4"/>
<dbReference type="GeneID" id="93219825"/>
<dbReference type="KEGG" id="hit:NTHI0947"/>
<dbReference type="HOGENOM" id="CLU_158491_1_2_6"/>
<dbReference type="Proteomes" id="UP000002525">
    <property type="component" value="Chromosome"/>
</dbReference>
<dbReference type="GO" id="GO:0022625">
    <property type="term" value="C:cytosolic large ribosomal subunit"/>
    <property type="evidence" value="ECO:0007669"/>
    <property type="project" value="TreeGrafter"/>
</dbReference>
<dbReference type="GO" id="GO:0003735">
    <property type="term" value="F:structural constituent of ribosome"/>
    <property type="evidence" value="ECO:0007669"/>
    <property type="project" value="InterPro"/>
</dbReference>
<dbReference type="GO" id="GO:0006412">
    <property type="term" value="P:translation"/>
    <property type="evidence" value="ECO:0007669"/>
    <property type="project" value="UniProtKB-UniRule"/>
</dbReference>
<dbReference type="CDD" id="cd00427">
    <property type="entry name" value="Ribosomal_L29_HIP"/>
    <property type="match status" value="1"/>
</dbReference>
<dbReference type="FunFam" id="1.10.287.310:FF:000001">
    <property type="entry name" value="50S ribosomal protein L29"/>
    <property type="match status" value="1"/>
</dbReference>
<dbReference type="Gene3D" id="1.10.287.310">
    <property type="match status" value="1"/>
</dbReference>
<dbReference type="HAMAP" id="MF_00374">
    <property type="entry name" value="Ribosomal_uL29"/>
    <property type="match status" value="1"/>
</dbReference>
<dbReference type="InterPro" id="IPR050063">
    <property type="entry name" value="Ribosomal_protein_uL29"/>
</dbReference>
<dbReference type="InterPro" id="IPR001854">
    <property type="entry name" value="Ribosomal_uL29"/>
</dbReference>
<dbReference type="InterPro" id="IPR018254">
    <property type="entry name" value="Ribosomal_uL29_CS"/>
</dbReference>
<dbReference type="InterPro" id="IPR036049">
    <property type="entry name" value="Ribosomal_uL29_sf"/>
</dbReference>
<dbReference type="NCBIfam" id="TIGR00012">
    <property type="entry name" value="L29"/>
    <property type="match status" value="1"/>
</dbReference>
<dbReference type="PANTHER" id="PTHR10916">
    <property type="entry name" value="60S RIBOSOMAL PROTEIN L35/50S RIBOSOMAL PROTEIN L29"/>
    <property type="match status" value="1"/>
</dbReference>
<dbReference type="PANTHER" id="PTHR10916:SF0">
    <property type="entry name" value="LARGE RIBOSOMAL SUBUNIT PROTEIN UL29C"/>
    <property type="match status" value="1"/>
</dbReference>
<dbReference type="Pfam" id="PF00831">
    <property type="entry name" value="Ribosomal_L29"/>
    <property type="match status" value="1"/>
</dbReference>
<dbReference type="SUPFAM" id="SSF46561">
    <property type="entry name" value="Ribosomal protein L29 (L29p)"/>
    <property type="match status" value="1"/>
</dbReference>
<dbReference type="PROSITE" id="PS00579">
    <property type="entry name" value="RIBOSOMAL_L29"/>
    <property type="match status" value="1"/>
</dbReference>
<feature type="chain" id="PRO_1000007491" description="Large ribosomal subunit protein uL29">
    <location>
        <begin position="1"/>
        <end position="63"/>
    </location>
</feature>
<gene>
    <name evidence="1" type="primary">rpmC</name>
    <name type="ordered locus">NTHI0947</name>
</gene>
<protein>
    <recommendedName>
        <fullName evidence="1">Large ribosomal subunit protein uL29</fullName>
    </recommendedName>
    <alternativeName>
        <fullName evidence="2">50S ribosomal protein L29</fullName>
    </alternativeName>
</protein>
<comment type="similarity">
    <text evidence="1">Belongs to the universal ribosomal protein uL29 family.</text>
</comment>
<reference key="1">
    <citation type="journal article" date="2005" name="J. Bacteriol.">
        <title>Genomic sequence of an otitis media isolate of nontypeable Haemophilus influenzae: comparative study with H. influenzae serotype d, strain KW20.</title>
        <authorList>
            <person name="Harrison A."/>
            <person name="Dyer D.W."/>
            <person name="Gillaspy A."/>
            <person name="Ray W.C."/>
            <person name="Mungur R."/>
            <person name="Carson M.B."/>
            <person name="Zhong H."/>
            <person name="Gipson J."/>
            <person name="Gipson M."/>
            <person name="Johnson L.S."/>
            <person name="Lewis L."/>
            <person name="Bakaletz L.O."/>
            <person name="Munson R.S. Jr."/>
        </authorList>
    </citation>
    <scope>NUCLEOTIDE SEQUENCE [LARGE SCALE GENOMIC DNA]</scope>
    <source>
        <strain>86-028NP</strain>
    </source>
</reference>
<proteinExistence type="inferred from homology"/>
<accession>Q4QMB4</accession>
<evidence type="ECO:0000255" key="1">
    <source>
        <dbReference type="HAMAP-Rule" id="MF_00374"/>
    </source>
</evidence>
<evidence type="ECO:0000305" key="2"/>
<organism>
    <name type="scientific">Haemophilus influenzae (strain 86-028NP)</name>
    <dbReference type="NCBI Taxonomy" id="281310"/>
    <lineage>
        <taxon>Bacteria</taxon>
        <taxon>Pseudomonadati</taxon>
        <taxon>Pseudomonadota</taxon>
        <taxon>Gammaproteobacteria</taxon>
        <taxon>Pasteurellales</taxon>
        <taxon>Pasteurellaceae</taxon>
        <taxon>Haemophilus</taxon>
    </lineage>
</organism>
<keyword id="KW-0687">Ribonucleoprotein</keyword>
<keyword id="KW-0689">Ribosomal protein</keyword>
<sequence>MKAQDLRTKSVEELNAELVNLLGEQFKLRMQTATGQLQQTHQAKQVRRDIARVKTVLTEKAGE</sequence>